<feature type="chain" id="PRO_0000058951" description="HPr kinase/phosphorylase">
    <location>
        <begin position="1"/>
        <end position="318"/>
    </location>
</feature>
<feature type="region of interest" description="Important for the catalytic mechanism of both phosphorylation and dephosphorylation" evidence="1">
    <location>
        <begin position="204"/>
        <end position="213"/>
    </location>
</feature>
<feature type="region of interest" description="Important for the catalytic mechanism of dephosphorylation" evidence="1">
    <location>
        <begin position="269"/>
        <end position="274"/>
    </location>
</feature>
<feature type="active site" evidence="1">
    <location>
        <position position="141"/>
    </location>
</feature>
<feature type="active site" evidence="1">
    <location>
        <position position="162"/>
    </location>
</feature>
<feature type="active site" description="Proton acceptor; for phosphorylation activity. Proton donor; for dephosphorylation activity" evidence="1">
    <location>
        <position position="180"/>
    </location>
</feature>
<feature type="active site" evidence="1">
    <location>
        <position position="248"/>
    </location>
</feature>
<feature type="binding site" evidence="1">
    <location>
        <begin position="156"/>
        <end position="163"/>
    </location>
    <ligand>
        <name>ATP</name>
        <dbReference type="ChEBI" id="CHEBI:30616"/>
    </ligand>
</feature>
<feature type="binding site" evidence="1">
    <location>
        <position position="163"/>
    </location>
    <ligand>
        <name>Mg(2+)</name>
        <dbReference type="ChEBI" id="CHEBI:18420"/>
    </ligand>
</feature>
<feature type="binding site" evidence="1">
    <location>
        <position position="205"/>
    </location>
    <ligand>
        <name>Mg(2+)</name>
        <dbReference type="ChEBI" id="CHEBI:18420"/>
    </ligand>
</feature>
<reference key="1">
    <citation type="journal article" date="2003" name="Proc. Natl. Acad. Sci. U.S.A.">
        <title>The complete genome sequence of Chromobacterium violaceum reveals remarkable and exploitable bacterial adaptability.</title>
        <authorList>
            <person name="Vasconcelos A.T.R."/>
            <person name="de Almeida D.F."/>
            <person name="Hungria M."/>
            <person name="Guimaraes C.T."/>
            <person name="Antonio R.V."/>
            <person name="Almeida F.C."/>
            <person name="de Almeida L.G.P."/>
            <person name="de Almeida R."/>
            <person name="Alves-Gomes J.A."/>
            <person name="Andrade E.M."/>
            <person name="Araripe J."/>
            <person name="de Araujo M.F.F."/>
            <person name="Astolfi-Filho S."/>
            <person name="Azevedo V."/>
            <person name="Baptista A.J."/>
            <person name="Bataus L.A.M."/>
            <person name="Batista J.S."/>
            <person name="Belo A."/>
            <person name="van den Berg C."/>
            <person name="Bogo M."/>
            <person name="Bonatto S."/>
            <person name="Bordignon J."/>
            <person name="Brigido M.M."/>
            <person name="Brito C.A."/>
            <person name="Brocchi M."/>
            <person name="Burity H.A."/>
            <person name="Camargo A.A."/>
            <person name="Cardoso D.D.P."/>
            <person name="Carneiro N.P."/>
            <person name="Carraro D.M."/>
            <person name="Carvalho C.M.B."/>
            <person name="Cascardo J.C.M."/>
            <person name="Cavada B.S."/>
            <person name="Chueire L.M.O."/>
            <person name="Creczynski-Pasa T.B."/>
            <person name="Cunha-Junior N.C."/>
            <person name="Fagundes N."/>
            <person name="Falcao C.L."/>
            <person name="Fantinatti F."/>
            <person name="Farias I.P."/>
            <person name="Felipe M.S.S."/>
            <person name="Ferrari L.P."/>
            <person name="Ferro J.A."/>
            <person name="Ferro M.I.T."/>
            <person name="Franco G.R."/>
            <person name="Freitas N.S.A."/>
            <person name="Furlan L.R."/>
            <person name="Gazzinelli R.T."/>
            <person name="Gomes E.A."/>
            <person name="Goncalves P.R."/>
            <person name="Grangeiro T.B."/>
            <person name="Grattapaglia D."/>
            <person name="Grisard E.C."/>
            <person name="Hanna E.S."/>
            <person name="Jardim S.N."/>
            <person name="Laurino J."/>
            <person name="Leoi L.C.T."/>
            <person name="Lima L.F.A."/>
            <person name="Loureiro M.F."/>
            <person name="Lyra M.C.C.P."/>
            <person name="Madeira H.M.F."/>
            <person name="Manfio G.P."/>
            <person name="Maranhao A.Q."/>
            <person name="Martins W.S."/>
            <person name="di Mauro S.M.Z."/>
            <person name="de Medeiros S.R.B."/>
            <person name="Meissner R.V."/>
            <person name="Moreira M.A.M."/>
            <person name="Nascimento F.F."/>
            <person name="Nicolas M.F."/>
            <person name="Oliveira J.G."/>
            <person name="Oliveira S.C."/>
            <person name="Paixao R.F.C."/>
            <person name="Parente J.A."/>
            <person name="Pedrosa F.O."/>
            <person name="Pena S.D.J."/>
            <person name="Pereira J.O."/>
            <person name="Pereira M."/>
            <person name="Pinto L.S.R.C."/>
            <person name="Pinto L.S."/>
            <person name="Porto J.I.R."/>
            <person name="Potrich D.P."/>
            <person name="Ramalho-Neto C.E."/>
            <person name="Reis A.M.M."/>
            <person name="Rigo L.U."/>
            <person name="Rondinelli E."/>
            <person name="Santos E.B.P."/>
            <person name="Santos F.R."/>
            <person name="Schneider M.P.C."/>
            <person name="Seuanez H.N."/>
            <person name="Silva A.M.R."/>
            <person name="da Silva A.L.C."/>
            <person name="Silva D.W."/>
            <person name="Silva R."/>
            <person name="Simoes I.C."/>
            <person name="Simon D."/>
            <person name="Soares C.M.A."/>
            <person name="Soares R.B.A."/>
            <person name="Souza E.M."/>
            <person name="Souza K.R.L."/>
            <person name="Souza R.C."/>
            <person name="Steffens M.B.R."/>
            <person name="Steindel M."/>
            <person name="Teixeira S.R."/>
            <person name="Urmenyi T."/>
            <person name="Vettore A."/>
            <person name="Wassem R."/>
            <person name="Zaha A."/>
            <person name="Simpson A.J.G."/>
        </authorList>
    </citation>
    <scope>NUCLEOTIDE SEQUENCE [LARGE SCALE GENOMIC DNA]</scope>
    <source>
        <strain>ATCC 12472 / DSM 30191 / JCM 1249 / CCUG 213 / NBRC 12614 / NCIMB 9131 / NCTC 9757 / MK</strain>
    </source>
</reference>
<protein>
    <recommendedName>
        <fullName evidence="1">HPr kinase/phosphorylase</fullName>
        <shortName evidence="1">HPrK/P</shortName>
        <ecNumber evidence="1">2.7.11.-</ecNumber>
        <ecNumber evidence="1">2.7.4.-</ecNumber>
    </recommendedName>
    <alternativeName>
        <fullName evidence="1">HPr(Ser) kinase/phosphorylase</fullName>
    </alternativeName>
</protein>
<accession>Q7NST5</accession>
<gene>
    <name evidence="1" type="primary">hprK</name>
    <name type="ordered locus">CV_3335</name>
</gene>
<name>HPRK_CHRVO</name>
<keyword id="KW-0067">ATP-binding</keyword>
<keyword id="KW-0418">Kinase</keyword>
<keyword id="KW-0460">Magnesium</keyword>
<keyword id="KW-0479">Metal-binding</keyword>
<keyword id="KW-0511">Multifunctional enzyme</keyword>
<keyword id="KW-0547">Nucleotide-binding</keyword>
<keyword id="KW-1185">Reference proteome</keyword>
<keyword id="KW-0723">Serine/threonine-protein kinase</keyword>
<keyword id="KW-0808">Transferase</keyword>
<evidence type="ECO:0000255" key="1">
    <source>
        <dbReference type="HAMAP-Rule" id="MF_01249"/>
    </source>
</evidence>
<evidence type="ECO:0000305" key="2"/>
<dbReference type="EC" id="2.7.11.-" evidence="1"/>
<dbReference type="EC" id="2.7.4.-" evidence="1"/>
<dbReference type="EMBL" id="AE016825">
    <property type="protein sequence ID" value="AAQ60999.1"/>
    <property type="status" value="ALT_INIT"/>
    <property type="molecule type" value="Genomic_DNA"/>
</dbReference>
<dbReference type="RefSeq" id="WP_011136882.1">
    <property type="nucleotide sequence ID" value="NC_005085.1"/>
</dbReference>
<dbReference type="SMR" id="Q7NST5"/>
<dbReference type="STRING" id="243365.CV_3335"/>
<dbReference type="GeneID" id="66364557"/>
<dbReference type="KEGG" id="cvi:CV_3335"/>
<dbReference type="eggNOG" id="COG1493">
    <property type="taxonomic scope" value="Bacteria"/>
</dbReference>
<dbReference type="HOGENOM" id="CLU_052030_0_2_4"/>
<dbReference type="OrthoDB" id="9778803at2"/>
<dbReference type="Proteomes" id="UP000001424">
    <property type="component" value="Chromosome"/>
</dbReference>
<dbReference type="GO" id="GO:0005524">
    <property type="term" value="F:ATP binding"/>
    <property type="evidence" value="ECO:0007669"/>
    <property type="project" value="UniProtKB-UniRule"/>
</dbReference>
<dbReference type="GO" id="GO:0000287">
    <property type="term" value="F:magnesium ion binding"/>
    <property type="evidence" value="ECO:0007669"/>
    <property type="project" value="UniProtKB-UniRule"/>
</dbReference>
<dbReference type="GO" id="GO:0000155">
    <property type="term" value="F:phosphorelay sensor kinase activity"/>
    <property type="evidence" value="ECO:0007669"/>
    <property type="project" value="InterPro"/>
</dbReference>
<dbReference type="GO" id="GO:0004674">
    <property type="term" value="F:protein serine/threonine kinase activity"/>
    <property type="evidence" value="ECO:0007669"/>
    <property type="project" value="UniProtKB-KW"/>
</dbReference>
<dbReference type="GO" id="GO:0004712">
    <property type="term" value="F:protein serine/threonine/tyrosine kinase activity"/>
    <property type="evidence" value="ECO:0007669"/>
    <property type="project" value="UniProtKB-UniRule"/>
</dbReference>
<dbReference type="GO" id="GO:0006109">
    <property type="term" value="P:regulation of carbohydrate metabolic process"/>
    <property type="evidence" value="ECO:0007669"/>
    <property type="project" value="UniProtKB-UniRule"/>
</dbReference>
<dbReference type="CDD" id="cd01918">
    <property type="entry name" value="HprK_C"/>
    <property type="match status" value="1"/>
</dbReference>
<dbReference type="FunFam" id="3.40.50.300:FF:000174">
    <property type="entry name" value="HPr kinase/phosphorylase"/>
    <property type="match status" value="1"/>
</dbReference>
<dbReference type="Gene3D" id="3.40.1390.20">
    <property type="entry name" value="HprK N-terminal domain-like"/>
    <property type="match status" value="1"/>
</dbReference>
<dbReference type="Gene3D" id="3.40.50.300">
    <property type="entry name" value="P-loop containing nucleotide triphosphate hydrolases"/>
    <property type="match status" value="1"/>
</dbReference>
<dbReference type="HAMAP" id="MF_01249">
    <property type="entry name" value="HPr_kinase"/>
    <property type="match status" value="1"/>
</dbReference>
<dbReference type="InterPro" id="IPR003755">
    <property type="entry name" value="HPr(Ser)_kin/Pase"/>
</dbReference>
<dbReference type="InterPro" id="IPR011104">
    <property type="entry name" value="Hpr_kin/Pase_C"/>
</dbReference>
<dbReference type="InterPro" id="IPR011126">
    <property type="entry name" value="Hpr_kin/Pase_Hpr_N"/>
</dbReference>
<dbReference type="InterPro" id="IPR027417">
    <property type="entry name" value="P-loop_NTPase"/>
</dbReference>
<dbReference type="InterPro" id="IPR028979">
    <property type="entry name" value="Ser_kin/Pase_Hpr-like_N_sf"/>
</dbReference>
<dbReference type="NCBIfam" id="TIGR00679">
    <property type="entry name" value="hpr-ser"/>
    <property type="match status" value="1"/>
</dbReference>
<dbReference type="PANTHER" id="PTHR30305:SF1">
    <property type="entry name" value="HPR KINASE_PHOSPHORYLASE"/>
    <property type="match status" value="1"/>
</dbReference>
<dbReference type="PANTHER" id="PTHR30305">
    <property type="entry name" value="PROTEIN YJDM-RELATED"/>
    <property type="match status" value="1"/>
</dbReference>
<dbReference type="Pfam" id="PF07475">
    <property type="entry name" value="Hpr_kinase_C"/>
    <property type="match status" value="1"/>
</dbReference>
<dbReference type="Pfam" id="PF02603">
    <property type="entry name" value="Hpr_kinase_N"/>
    <property type="match status" value="1"/>
</dbReference>
<dbReference type="SUPFAM" id="SSF75138">
    <property type="entry name" value="HprK N-terminal domain-like"/>
    <property type="match status" value="1"/>
</dbReference>
<dbReference type="SUPFAM" id="SSF53795">
    <property type="entry name" value="PEP carboxykinase-like"/>
    <property type="match status" value="1"/>
</dbReference>
<sequence>MPSITVRRLYQENQQKLNLTWVAGTGGSDNVIGNDDQRPTLALVGHLNFIHPNRVQVLGLAEVDYLNKLEQSAAKTALDQLFHKSMSVVMVANGQPVPRLLRDYCHSHNVPLMCSTLESPYLMDVLRIYLARALAVSTVLHGVFLDVFEIGVLIMGDSAMGKSELALELISRGHGMVADDAVELYRIGPDTLEGRCPPLLRDFLEVRGLGILNIRTIFGETAVRPKKVLKLIIHLVKANDQAMQALDRLNIQSETQDIIGVTVRKVVLPVAAGRNLAVLVEAAVRNYILQLRGIDSTREFIERHTNFLRDQENAPDID</sequence>
<organism>
    <name type="scientific">Chromobacterium violaceum (strain ATCC 12472 / DSM 30191 / JCM 1249 / CCUG 213 / NBRC 12614 / NCIMB 9131 / NCTC 9757 / MK)</name>
    <dbReference type="NCBI Taxonomy" id="243365"/>
    <lineage>
        <taxon>Bacteria</taxon>
        <taxon>Pseudomonadati</taxon>
        <taxon>Pseudomonadota</taxon>
        <taxon>Betaproteobacteria</taxon>
        <taxon>Neisseriales</taxon>
        <taxon>Chromobacteriaceae</taxon>
        <taxon>Chromobacterium</taxon>
    </lineage>
</organism>
<proteinExistence type="inferred from homology"/>
<comment type="function">
    <text evidence="1">Catalyzes the ATP- as well as the pyrophosphate-dependent phosphorylation of a specific serine residue in HPr, a phosphocarrier protein of the phosphoenolpyruvate-dependent sugar phosphotransferase system (PTS). HprK/P also catalyzes the pyrophosphate-producing, inorganic phosphate-dependent dephosphorylation (phosphorolysis) of seryl-phosphorylated HPr (P-Ser-HPr).</text>
</comment>
<comment type="catalytic activity">
    <reaction evidence="1">
        <text>[HPr protein]-L-serine + ATP = [HPr protein]-O-phospho-L-serine + ADP + H(+)</text>
        <dbReference type="Rhea" id="RHEA:46600"/>
        <dbReference type="Rhea" id="RHEA-COMP:11602"/>
        <dbReference type="Rhea" id="RHEA-COMP:11603"/>
        <dbReference type="ChEBI" id="CHEBI:15378"/>
        <dbReference type="ChEBI" id="CHEBI:29999"/>
        <dbReference type="ChEBI" id="CHEBI:30616"/>
        <dbReference type="ChEBI" id="CHEBI:83421"/>
        <dbReference type="ChEBI" id="CHEBI:456216"/>
    </reaction>
</comment>
<comment type="catalytic activity">
    <reaction evidence="1">
        <text>[HPr protein]-O-phospho-L-serine + phosphate + H(+) = [HPr protein]-L-serine + diphosphate</text>
        <dbReference type="Rhea" id="RHEA:46604"/>
        <dbReference type="Rhea" id="RHEA-COMP:11602"/>
        <dbReference type="Rhea" id="RHEA-COMP:11603"/>
        <dbReference type="ChEBI" id="CHEBI:15378"/>
        <dbReference type="ChEBI" id="CHEBI:29999"/>
        <dbReference type="ChEBI" id="CHEBI:33019"/>
        <dbReference type="ChEBI" id="CHEBI:43474"/>
        <dbReference type="ChEBI" id="CHEBI:83421"/>
    </reaction>
</comment>
<comment type="cofactor">
    <cofactor evidence="1">
        <name>Mg(2+)</name>
        <dbReference type="ChEBI" id="CHEBI:18420"/>
    </cofactor>
</comment>
<comment type="subunit">
    <text evidence="1">Homohexamer.</text>
</comment>
<comment type="domain">
    <text evidence="1">The Walker A ATP-binding motif also binds Pi and PPi.</text>
</comment>
<comment type="miscellaneous">
    <text evidence="1">Both phosphorylation and phosphorolysis are carried out by the same active site and suggest a common mechanism for both reactions.</text>
</comment>
<comment type="similarity">
    <text evidence="1">Belongs to the HPrK/P family.</text>
</comment>
<comment type="sequence caution" evidence="2">
    <conflict type="erroneous initiation">
        <sequence resource="EMBL-CDS" id="AAQ60999"/>
    </conflict>
</comment>